<gene>
    <name evidence="1" type="primary">ubiG</name>
    <name type="ordered locus">VV1246</name>
</gene>
<name>UBIG_VIBVY</name>
<accession>Q7MM27</accession>
<reference key="1">
    <citation type="journal article" date="2003" name="Genome Res.">
        <title>Comparative genome analysis of Vibrio vulnificus, a marine pathogen.</title>
        <authorList>
            <person name="Chen C.-Y."/>
            <person name="Wu K.-M."/>
            <person name="Chang Y.-C."/>
            <person name="Chang C.-H."/>
            <person name="Tsai H.-C."/>
            <person name="Liao T.-L."/>
            <person name="Liu Y.-M."/>
            <person name="Chen H.-J."/>
            <person name="Shen A.B.-T."/>
            <person name="Li J.-C."/>
            <person name="Su T.-L."/>
            <person name="Shao C.-P."/>
            <person name="Lee C.-T."/>
            <person name="Hor L.-I."/>
            <person name="Tsai S.-F."/>
        </authorList>
    </citation>
    <scope>NUCLEOTIDE SEQUENCE [LARGE SCALE GENOMIC DNA]</scope>
    <source>
        <strain>YJ016</strain>
    </source>
</reference>
<feature type="chain" id="PRO_0000193408" description="Ubiquinone biosynthesis O-methyltransferase">
    <location>
        <begin position="1"/>
        <end position="235"/>
    </location>
</feature>
<feature type="binding site" evidence="1">
    <location>
        <position position="39"/>
    </location>
    <ligand>
        <name>S-adenosyl-L-methionine</name>
        <dbReference type="ChEBI" id="CHEBI:59789"/>
    </ligand>
</feature>
<feature type="binding site" evidence="1">
    <location>
        <position position="59"/>
    </location>
    <ligand>
        <name>S-adenosyl-L-methionine</name>
        <dbReference type="ChEBI" id="CHEBI:59789"/>
    </ligand>
</feature>
<feature type="binding site" evidence="1">
    <location>
        <position position="80"/>
    </location>
    <ligand>
        <name>S-adenosyl-L-methionine</name>
        <dbReference type="ChEBI" id="CHEBI:59789"/>
    </ligand>
</feature>
<feature type="binding site" evidence="1">
    <location>
        <position position="124"/>
    </location>
    <ligand>
        <name>S-adenosyl-L-methionine</name>
        <dbReference type="ChEBI" id="CHEBI:59789"/>
    </ligand>
</feature>
<sequence length="235" mass="26244">MTKTQNVDPNEIKKFEDMASRWWDLEGEFKPLHQINPLRLDYVLSKADGLFGKKVLDVGCGGGILAESMAKEGAVVTGLDMGKEPLEVARLHALETGTKLTYIQSTIEDHAAENAQMYDVVTCMEMLEHVPDPLSVIRSCAALVKPGGHVFFSTLNRNIKSYLFAIVGAEKLLKIVPEGTHDHDKFIRPSELIKMIDQTDLCEQGITGLHYNPLSDTYKLGRNVDVNYIVHTQKF</sequence>
<keyword id="KW-0489">Methyltransferase</keyword>
<keyword id="KW-0949">S-adenosyl-L-methionine</keyword>
<keyword id="KW-0808">Transferase</keyword>
<keyword id="KW-0831">Ubiquinone biosynthesis</keyword>
<proteinExistence type="inferred from homology"/>
<comment type="function">
    <text evidence="1">O-methyltransferase that catalyzes the 2 O-methylation steps in the ubiquinone biosynthetic pathway.</text>
</comment>
<comment type="catalytic activity">
    <reaction evidence="1">
        <text>a 3-demethylubiquinol + S-adenosyl-L-methionine = a ubiquinol + S-adenosyl-L-homocysteine + H(+)</text>
        <dbReference type="Rhea" id="RHEA:44380"/>
        <dbReference type="Rhea" id="RHEA-COMP:9566"/>
        <dbReference type="Rhea" id="RHEA-COMP:10914"/>
        <dbReference type="ChEBI" id="CHEBI:15378"/>
        <dbReference type="ChEBI" id="CHEBI:17976"/>
        <dbReference type="ChEBI" id="CHEBI:57856"/>
        <dbReference type="ChEBI" id="CHEBI:59789"/>
        <dbReference type="ChEBI" id="CHEBI:84422"/>
        <dbReference type="EC" id="2.1.1.64"/>
    </reaction>
</comment>
<comment type="catalytic activity">
    <reaction evidence="1">
        <text>a 3-(all-trans-polyprenyl)benzene-1,2-diol + S-adenosyl-L-methionine = a 2-methoxy-6-(all-trans-polyprenyl)phenol + S-adenosyl-L-homocysteine + H(+)</text>
        <dbReference type="Rhea" id="RHEA:31411"/>
        <dbReference type="Rhea" id="RHEA-COMP:9550"/>
        <dbReference type="Rhea" id="RHEA-COMP:9551"/>
        <dbReference type="ChEBI" id="CHEBI:15378"/>
        <dbReference type="ChEBI" id="CHEBI:57856"/>
        <dbReference type="ChEBI" id="CHEBI:59789"/>
        <dbReference type="ChEBI" id="CHEBI:62729"/>
        <dbReference type="ChEBI" id="CHEBI:62731"/>
        <dbReference type="EC" id="2.1.1.222"/>
    </reaction>
</comment>
<comment type="pathway">
    <text evidence="1">Cofactor biosynthesis; ubiquinone biosynthesis.</text>
</comment>
<comment type="similarity">
    <text evidence="1">Belongs to the methyltransferase superfamily. UbiG/COQ3 family.</text>
</comment>
<protein>
    <recommendedName>
        <fullName evidence="1">Ubiquinone biosynthesis O-methyltransferase</fullName>
    </recommendedName>
    <alternativeName>
        <fullName evidence="1">2-polyprenyl-6-hydroxyphenol methylase</fullName>
        <ecNumber evidence="1">2.1.1.222</ecNumber>
    </alternativeName>
    <alternativeName>
        <fullName evidence="1">3-demethylubiquinone 3-O-methyltransferase</fullName>
        <ecNumber evidence="1">2.1.1.64</ecNumber>
    </alternativeName>
</protein>
<evidence type="ECO:0000255" key="1">
    <source>
        <dbReference type="HAMAP-Rule" id="MF_00472"/>
    </source>
</evidence>
<dbReference type="EC" id="2.1.1.222" evidence="1"/>
<dbReference type="EC" id="2.1.1.64" evidence="1"/>
<dbReference type="EMBL" id="BA000037">
    <property type="protein sequence ID" value="BAC94010.1"/>
    <property type="molecule type" value="Genomic_DNA"/>
</dbReference>
<dbReference type="RefSeq" id="WP_011080845.1">
    <property type="nucleotide sequence ID" value="NC_005139.1"/>
</dbReference>
<dbReference type="SMR" id="Q7MM27"/>
<dbReference type="STRING" id="672.VV93_v1c11650"/>
<dbReference type="KEGG" id="vvy:VV1246"/>
<dbReference type="PATRIC" id="fig|196600.6.peg.1238"/>
<dbReference type="eggNOG" id="COG2227">
    <property type="taxonomic scope" value="Bacteria"/>
</dbReference>
<dbReference type="HOGENOM" id="CLU_042432_5_0_6"/>
<dbReference type="UniPathway" id="UPA00232"/>
<dbReference type="Proteomes" id="UP000002675">
    <property type="component" value="Chromosome I"/>
</dbReference>
<dbReference type="GO" id="GO:0102208">
    <property type="term" value="F:2-polyprenyl-6-hydroxyphenol methylase activity"/>
    <property type="evidence" value="ECO:0007669"/>
    <property type="project" value="UniProtKB-EC"/>
</dbReference>
<dbReference type="GO" id="GO:0061542">
    <property type="term" value="F:3-demethylubiquinol 3-O-methyltransferase activity"/>
    <property type="evidence" value="ECO:0007669"/>
    <property type="project" value="UniProtKB-UniRule"/>
</dbReference>
<dbReference type="GO" id="GO:0010420">
    <property type="term" value="F:polyprenyldihydroxybenzoate methyltransferase activity"/>
    <property type="evidence" value="ECO:0007669"/>
    <property type="project" value="InterPro"/>
</dbReference>
<dbReference type="GO" id="GO:0032259">
    <property type="term" value="P:methylation"/>
    <property type="evidence" value="ECO:0007669"/>
    <property type="project" value="UniProtKB-KW"/>
</dbReference>
<dbReference type="CDD" id="cd02440">
    <property type="entry name" value="AdoMet_MTases"/>
    <property type="match status" value="1"/>
</dbReference>
<dbReference type="FunFam" id="3.40.50.150:FF:000028">
    <property type="entry name" value="Ubiquinone biosynthesis O-methyltransferase"/>
    <property type="match status" value="1"/>
</dbReference>
<dbReference type="Gene3D" id="3.40.50.150">
    <property type="entry name" value="Vaccinia Virus protein VP39"/>
    <property type="match status" value="1"/>
</dbReference>
<dbReference type="HAMAP" id="MF_00472">
    <property type="entry name" value="UbiG"/>
    <property type="match status" value="1"/>
</dbReference>
<dbReference type="InterPro" id="IPR029063">
    <property type="entry name" value="SAM-dependent_MTases_sf"/>
</dbReference>
<dbReference type="InterPro" id="IPR010233">
    <property type="entry name" value="UbiG_MeTrfase"/>
</dbReference>
<dbReference type="NCBIfam" id="TIGR01983">
    <property type="entry name" value="UbiG"/>
    <property type="match status" value="1"/>
</dbReference>
<dbReference type="PANTHER" id="PTHR43464">
    <property type="entry name" value="METHYLTRANSFERASE"/>
    <property type="match status" value="1"/>
</dbReference>
<dbReference type="PANTHER" id="PTHR43464:SF19">
    <property type="entry name" value="UBIQUINONE BIOSYNTHESIS O-METHYLTRANSFERASE, MITOCHONDRIAL"/>
    <property type="match status" value="1"/>
</dbReference>
<dbReference type="Pfam" id="PF13489">
    <property type="entry name" value="Methyltransf_23"/>
    <property type="match status" value="1"/>
</dbReference>
<dbReference type="SUPFAM" id="SSF53335">
    <property type="entry name" value="S-adenosyl-L-methionine-dependent methyltransferases"/>
    <property type="match status" value="1"/>
</dbReference>
<organism>
    <name type="scientific">Vibrio vulnificus (strain YJ016)</name>
    <dbReference type="NCBI Taxonomy" id="196600"/>
    <lineage>
        <taxon>Bacteria</taxon>
        <taxon>Pseudomonadati</taxon>
        <taxon>Pseudomonadota</taxon>
        <taxon>Gammaproteobacteria</taxon>
        <taxon>Vibrionales</taxon>
        <taxon>Vibrionaceae</taxon>
        <taxon>Vibrio</taxon>
    </lineage>
</organism>